<proteinExistence type="evidence at protein level"/>
<dbReference type="GO" id="GO:0045735">
    <property type="term" value="F:nutrient reservoir activity"/>
    <property type="evidence" value="ECO:0007669"/>
    <property type="project" value="UniProtKB-KW"/>
</dbReference>
<feature type="chain" id="PRO_0000282354" description="Rubusin">
    <location>
        <begin position="1"/>
        <end position="17" status="greater than"/>
    </location>
</feature>
<feature type="non-terminal residue" evidence="2">
    <location>
        <position position="17"/>
    </location>
</feature>
<organism>
    <name type="scientific">Rubus idaeus</name>
    <name type="common">Raspberry</name>
    <dbReference type="NCBI Taxonomy" id="32247"/>
    <lineage>
        <taxon>Eukaryota</taxon>
        <taxon>Viridiplantae</taxon>
        <taxon>Streptophyta</taxon>
        <taxon>Embryophyta</taxon>
        <taxon>Tracheophyta</taxon>
        <taxon>Spermatophyta</taxon>
        <taxon>Magnoliopsida</taxon>
        <taxon>eudicotyledons</taxon>
        <taxon>Gunneridae</taxon>
        <taxon>Pentapetalae</taxon>
        <taxon>rosids</taxon>
        <taxon>fabids</taxon>
        <taxon>Rosales</taxon>
        <taxon>Rosaceae</taxon>
        <taxon>Rosoideae</taxon>
        <taxon>Rosoideae incertae sedis</taxon>
        <taxon>Rubus</taxon>
    </lineage>
</organism>
<reference evidence="3" key="1">
    <citation type="submission" date="2007-02" db="UniProtKB">
        <title>Rubusin, the storage protein present in raspberry (Rubus idaeus L.) roots.</title>
        <authorList>
            <person name="Borrego V."/>
            <person name="Martins P."/>
            <person name="Santos C."/>
            <person name="Oliveira P."/>
            <person name="Teixeira A.R."/>
            <person name="Ferreira R.B."/>
        </authorList>
    </citation>
    <scope>PROTEIN SEQUENCE</scope>
    <scope>FUNCTION</scope>
    <source>
        <tissue evidence="1">Root</tissue>
    </source>
</reference>
<evidence type="ECO:0000269" key="1">
    <source ref="1"/>
</evidence>
<evidence type="ECO:0000303" key="2">
    <source ref="1"/>
</evidence>
<evidence type="ECO:0000305" key="3"/>
<keyword id="KW-0903">Direct protein sequencing</keyword>
<keyword id="KW-0758">Storage protein</keyword>
<name>RUBU_RUBID</name>
<protein>
    <recommendedName>
        <fullName>Rubusin</fullName>
    </recommendedName>
</protein>
<accession>P85096</accession>
<sequence>AVTSSVADTTTVVRDDF</sequence>
<comment type="function">
    <text evidence="1">Acts as a storage protein.</text>
</comment>